<sequence>MEKKWKYCAVYYIIQIHFVKGVWEKTVNTEENVYATLGSDVNLTCQTQTVGFFVQMQWSKVTNKIDLIAVYHPQYGFYCAYGRPCESLVTFTETPENGSKWTLHLRNMSCSVSGRYECMLVLYPEGIQTKIYNLLIQTHVTADEWNSNHTIEIEINQTLEIPCFQNSSSKISSEFTYAWSVENSSTDSWVLLSKGIKEDNGTQETLISQNHLISNSTLLKDRVKLGTDYRLHLSPVQIFDDGRKFSCHIRVGPNKILRSSTTVKVFAKPEIPVIVENNSTDVLVERRFTCLLKNVFPKANITWFIDGSFLHDEKEGIYITNEERKGKDGFLELKSVLTRVHSNKPAQSDNLTIWCMALSPVPGNKVWNISSEKITFLLGSEISSTDPPLSVTESTLDTQPSPASSVSPARYPATSSVTLVDVSALRPNTTPQPSNSSMTTRGFNYPWTSSGTDTKKSVSRIPSETYSSSPSGAGSTLHDNVFTSTARAFSEVPTTANGSTKTNHVHITGIVVNKPKDGMSWPVIVAALLFCCMILFGLGVRKWCQYQKEIMERPPPFKPPPPPIKYTCIQEPNESDLPYHEMETL</sequence>
<reference key="1">
    <citation type="journal article" date="1992" name="J. Immunol.">
        <title>Identification and molecular cloning of tactile. A novel human T cell activation antigen that is a member of the Ig gene superfamily.</title>
        <authorList>
            <person name="Wang P.L."/>
            <person name="O'Farrell S."/>
            <person name="Clayberger C."/>
            <person name="Krensky A.M."/>
        </authorList>
    </citation>
    <scope>NUCLEOTIDE SEQUENCE [MRNA] (ISOFORM 2)</scope>
</reference>
<reference key="2">
    <citation type="journal article" date="2007" name="BMC Genomics">
        <title>The full-ORF clone resource of the German cDNA consortium.</title>
        <authorList>
            <person name="Bechtel S."/>
            <person name="Rosenfelder H."/>
            <person name="Duda A."/>
            <person name="Schmidt C.P."/>
            <person name="Ernst U."/>
            <person name="Wellenreuther R."/>
            <person name="Mehrle A."/>
            <person name="Schuster C."/>
            <person name="Bahr A."/>
            <person name="Bloecker H."/>
            <person name="Heubner D."/>
            <person name="Hoerlein A."/>
            <person name="Michel G."/>
            <person name="Wedler H."/>
            <person name="Koehrer K."/>
            <person name="Ottenwaelder B."/>
            <person name="Poustka A."/>
            <person name="Wiemann S."/>
            <person name="Schupp I."/>
        </authorList>
    </citation>
    <scope>NUCLEOTIDE SEQUENCE [LARGE SCALE MRNA] (ISOFORM 1)</scope>
    <source>
        <tissue>Lymph node</tissue>
    </source>
</reference>
<reference key="3">
    <citation type="submission" date="2005-09" db="EMBL/GenBank/DDBJ databases">
        <authorList>
            <person name="Mural R.J."/>
            <person name="Istrail S."/>
            <person name="Sutton G.G."/>
            <person name="Florea L."/>
            <person name="Halpern A.L."/>
            <person name="Mobarry C.M."/>
            <person name="Lippert R."/>
            <person name="Walenz B."/>
            <person name="Shatkay H."/>
            <person name="Dew I."/>
            <person name="Miller J.R."/>
            <person name="Flanigan M.J."/>
            <person name="Edwards N.J."/>
            <person name="Bolanos R."/>
            <person name="Fasulo D."/>
            <person name="Halldorsson B.V."/>
            <person name="Hannenhalli S."/>
            <person name="Turner R."/>
            <person name="Yooseph S."/>
            <person name="Lu F."/>
            <person name="Nusskern D.R."/>
            <person name="Shue B.C."/>
            <person name="Zheng X.H."/>
            <person name="Zhong F."/>
            <person name="Delcher A.L."/>
            <person name="Huson D.H."/>
            <person name="Kravitz S.A."/>
            <person name="Mouchard L."/>
            <person name="Reinert K."/>
            <person name="Remington K.A."/>
            <person name="Clark A.G."/>
            <person name="Waterman M.S."/>
            <person name="Eichler E.E."/>
            <person name="Adams M.D."/>
            <person name="Hunkapiller M.W."/>
            <person name="Myers E.W."/>
            <person name="Venter J.C."/>
        </authorList>
    </citation>
    <scope>NUCLEOTIDE SEQUENCE [LARGE SCALE GENOMIC DNA]</scope>
</reference>
<reference key="4">
    <citation type="journal article" date="2004" name="J. Immunol.">
        <title>CD96 (tactile) promotes NK cell-target cell adhesion by interacting with the poliovirus receptor (CD155).</title>
        <authorList>
            <person name="Fuchs A."/>
            <person name="Cella M."/>
            <person name="Giurisato E."/>
            <person name="Shaw A.S."/>
            <person name="Colonna M."/>
        </authorList>
    </citation>
    <scope>INTERACTION WITH PVR</scope>
</reference>
<reference key="5">
    <citation type="journal article" date="2009" name="Nat. Biotechnol.">
        <title>Mass-spectrometric identification and relative quantification of N-linked cell surface glycoproteins.</title>
        <authorList>
            <person name="Wollscheid B."/>
            <person name="Bausch-Fluck D."/>
            <person name="Henderson C."/>
            <person name="O'Brien R."/>
            <person name="Bibel M."/>
            <person name="Schiess R."/>
            <person name="Aebersold R."/>
            <person name="Watts J.D."/>
        </authorList>
    </citation>
    <scope>GLYCOSYLATION [LARGE SCALE ANALYSIS] AT ASN-277 AND ASN-278</scope>
    <source>
        <tissue>Leukemic T-cell</tissue>
    </source>
</reference>
<reference key="6">
    <citation type="journal article" date="2007" name="Am. J. Hum. Genet.">
        <title>Mutations in CD96, a member of the immunoglobulin superfamily, cause a form of the C (Opitz trigonocephaly) syndrome.</title>
        <authorList>
            <person name="Kaname T."/>
            <person name="Yanagi K."/>
            <person name="Chinen Y."/>
            <person name="Makita Y."/>
            <person name="Okamoto N."/>
            <person name="Maehara H."/>
            <person name="Owan I."/>
            <person name="Kanaya F."/>
            <person name="Kubota Y."/>
            <person name="Oike Y."/>
            <person name="Yamamoto T."/>
            <person name="Kurosawa K."/>
            <person name="Fukushima Y."/>
            <person name="Bohring A."/>
            <person name="Opitz J.M."/>
            <person name="Yoshiura K."/>
            <person name="Niikawa N."/>
            <person name="Naritomi K."/>
        </authorList>
    </citation>
    <scope>VARIANT CSYN MET-280</scope>
</reference>
<proteinExistence type="evidence at protein level"/>
<protein>
    <recommendedName>
        <fullName>T-cell surface protein tactile</fullName>
    </recommendedName>
    <alternativeName>
        <fullName>Cell surface antigen CD96</fullName>
    </alternativeName>
    <alternativeName>
        <fullName>T cell-activated increased late expression protein</fullName>
    </alternativeName>
    <cdAntigenName>CD96</cdAntigenName>
</protein>
<organism>
    <name type="scientific">Homo sapiens</name>
    <name type="common">Human</name>
    <dbReference type="NCBI Taxonomy" id="9606"/>
    <lineage>
        <taxon>Eukaryota</taxon>
        <taxon>Metazoa</taxon>
        <taxon>Chordata</taxon>
        <taxon>Craniata</taxon>
        <taxon>Vertebrata</taxon>
        <taxon>Euteleostomi</taxon>
        <taxon>Mammalia</taxon>
        <taxon>Eutheria</taxon>
        <taxon>Euarchontoglires</taxon>
        <taxon>Primates</taxon>
        <taxon>Haplorrhini</taxon>
        <taxon>Catarrhini</taxon>
        <taxon>Hominidae</taxon>
        <taxon>Homo</taxon>
    </lineage>
</organism>
<name>TACT_HUMAN</name>
<feature type="signal peptide" evidence="1">
    <location>
        <begin position="1"/>
        <end position="21"/>
    </location>
</feature>
<feature type="chain" id="PRO_0000014970" description="T-cell surface protein tactile">
    <location>
        <begin position="22"/>
        <end position="585"/>
    </location>
</feature>
<feature type="topological domain" description="Extracellular" evidence="1">
    <location>
        <begin position="22"/>
        <end position="519"/>
    </location>
</feature>
<feature type="transmembrane region" description="Helical" evidence="1">
    <location>
        <begin position="520"/>
        <end position="540"/>
    </location>
</feature>
<feature type="topological domain" description="Cytoplasmic" evidence="1">
    <location>
        <begin position="541"/>
        <end position="585"/>
    </location>
</feature>
<feature type="domain" description="Ig-like V-type 1">
    <location>
        <begin position="38"/>
        <end position="125"/>
    </location>
</feature>
<feature type="domain" description="Ig-like V-type 2">
    <location>
        <begin position="156"/>
        <end position="238"/>
    </location>
</feature>
<feature type="domain" description="Ig-like C2-type">
    <location>
        <begin position="269"/>
        <end position="375"/>
    </location>
</feature>
<feature type="region of interest" description="Disordered" evidence="2">
    <location>
        <begin position="385"/>
        <end position="475"/>
    </location>
</feature>
<feature type="compositionally biased region" description="Polar residues" evidence="2">
    <location>
        <begin position="385"/>
        <end position="418"/>
    </location>
</feature>
<feature type="compositionally biased region" description="Polar residues" evidence="2">
    <location>
        <begin position="426"/>
        <end position="452"/>
    </location>
</feature>
<feature type="compositionally biased region" description="Polar residues" evidence="2">
    <location>
        <begin position="460"/>
        <end position="475"/>
    </location>
</feature>
<feature type="glycosylation site" description="N-linked (GlcNAc...) asparagine" evidence="1">
    <location>
        <position position="42"/>
    </location>
</feature>
<feature type="glycosylation site" description="N-linked (GlcNAc...) asparagine" evidence="1">
    <location>
        <position position="97"/>
    </location>
</feature>
<feature type="glycosylation site" description="N-linked (GlcNAc...) asparagine" evidence="1">
    <location>
        <position position="107"/>
    </location>
</feature>
<feature type="glycosylation site" description="N-linked (GlcNAc...) asparagine" evidence="1">
    <location>
        <position position="148"/>
    </location>
</feature>
<feature type="glycosylation site" description="N-linked (GlcNAc...) asparagine" evidence="1">
    <location>
        <position position="156"/>
    </location>
</feature>
<feature type="glycosylation site" description="N-linked (GlcNAc...) asparagine" evidence="1">
    <location>
        <position position="166"/>
    </location>
</feature>
<feature type="glycosylation site" description="N-linked (GlcNAc...) asparagine" evidence="1">
    <location>
        <position position="200"/>
    </location>
</feature>
<feature type="glycosylation site" description="N-linked (GlcNAc...) asparagine" evidence="1">
    <location>
        <position position="215"/>
    </location>
</feature>
<feature type="glycosylation site" description="N-linked (GlcNAc...) asparagine" evidence="5">
    <location>
        <position position="277"/>
    </location>
</feature>
<feature type="glycosylation site" description="N-linked (GlcNAc...) asparagine" evidence="5">
    <location>
        <position position="278"/>
    </location>
</feature>
<feature type="glycosylation site" description="N-linked (GlcNAc...) asparagine" evidence="1">
    <location>
        <position position="300"/>
    </location>
</feature>
<feature type="glycosylation site" description="N-linked (GlcNAc...) asparagine" evidence="1">
    <location>
        <position position="350"/>
    </location>
</feature>
<feature type="glycosylation site" description="N-linked (GlcNAc...) asparagine" evidence="1">
    <location>
        <position position="368"/>
    </location>
</feature>
<feature type="glycosylation site" description="N-linked (GlcNAc...) asparagine" evidence="1">
    <location>
        <position position="435"/>
    </location>
</feature>
<feature type="glycosylation site" description="N-linked (GlcNAc...) asparagine" evidence="1">
    <location>
        <position position="497"/>
    </location>
</feature>
<feature type="disulfide bond" evidence="7">
    <location>
        <begin position="45"/>
        <end position="118"/>
    </location>
</feature>
<feature type="disulfide bond" evidence="7">
    <location>
        <begin position="163"/>
        <end position="247"/>
    </location>
</feature>
<feature type="disulfide bond" evidence="7">
    <location>
        <begin position="290"/>
        <end position="355"/>
    </location>
</feature>
<feature type="splice variant" id="VSP_029908" description="In isoform 2." evidence="6">
    <location>
        <begin position="182"/>
        <end position="197"/>
    </location>
</feature>
<feature type="sequence variant" id="VAR_021928" description="In dbSNP:rs2276872.">
    <original>A</original>
    <variation>P</variation>
    <location>
        <position position="142"/>
    </location>
</feature>
<feature type="sequence variant" id="VAR_037578" description="In CSYN; dbSNP:rs119477056." evidence="4">
    <original>T</original>
    <variation>M</variation>
    <location>
        <position position="280"/>
    </location>
</feature>
<feature type="strand" evidence="8">
    <location>
        <begin position="28"/>
        <end position="35"/>
    </location>
</feature>
<feature type="strand" evidence="8">
    <location>
        <begin position="41"/>
        <end position="48"/>
    </location>
</feature>
<feature type="strand" evidence="8">
    <location>
        <begin position="50"/>
        <end position="72"/>
    </location>
</feature>
<feature type="turn" evidence="8">
    <location>
        <begin position="73"/>
        <end position="75"/>
    </location>
</feature>
<feature type="strand" evidence="8">
    <location>
        <begin position="76"/>
        <end position="81"/>
    </location>
</feature>
<feature type="turn" evidence="8">
    <location>
        <begin position="86"/>
        <end position="88"/>
    </location>
</feature>
<feature type="strand" evidence="8">
    <location>
        <begin position="89"/>
        <end position="92"/>
    </location>
</feature>
<feature type="strand" evidence="8">
    <location>
        <begin position="98"/>
        <end position="105"/>
    </location>
</feature>
<feature type="turn" evidence="8">
    <location>
        <begin position="110"/>
        <end position="112"/>
    </location>
</feature>
<feature type="strand" evidence="8">
    <location>
        <begin position="114"/>
        <end position="123"/>
    </location>
</feature>
<feature type="strand" evidence="8">
    <location>
        <begin position="126"/>
        <end position="136"/>
    </location>
</feature>
<evidence type="ECO:0000255" key="1"/>
<evidence type="ECO:0000256" key="2">
    <source>
        <dbReference type="SAM" id="MobiDB-lite"/>
    </source>
</evidence>
<evidence type="ECO:0000269" key="3">
    <source>
    </source>
</evidence>
<evidence type="ECO:0000269" key="4">
    <source>
    </source>
</evidence>
<evidence type="ECO:0000269" key="5">
    <source>
    </source>
</evidence>
<evidence type="ECO:0000303" key="6">
    <source>
    </source>
</evidence>
<evidence type="ECO:0000305" key="7"/>
<evidence type="ECO:0007829" key="8">
    <source>
        <dbReference type="PDB" id="6ARQ"/>
    </source>
</evidence>
<keyword id="KW-0002">3D-structure</keyword>
<keyword id="KW-0025">Alternative splicing</keyword>
<keyword id="KW-0130">Cell adhesion</keyword>
<keyword id="KW-0160">Chromosomal rearrangement</keyword>
<keyword id="KW-0989">Craniosynostosis</keyword>
<keyword id="KW-0225">Disease variant</keyword>
<keyword id="KW-1015">Disulfide bond</keyword>
<keyword id="KW-0325">Glycoprotein</keyword>
<keyword id="KW-0393">Immunoglobulin domain</keyword>
<keyword id="KW-0472">Membrane</keyword>
<keyword id="KW-1267">Proteomics identification</keyword>
<keyword id="KW-1185">Reference proteome</keyword>
<keyword id="KW-0677">Repeat</keyword>
<keyword id="KW-0732">Signal</keyword>
<keyword id="KW-0812">Transmembrane</keyword>
<keyword id="KW-1133">Transmembrane helix</keyword>
<dbReference type="EMBL" id="M88282">
    <property type="protein sequence ID" value="AAA36662.1"/>
    <property type="molecule type" value="mRNA"/>
</dbReference>
<dbReference type="EMBL" id="AL833681">
    <property type="protein sequence ID" value="CAI46155.1"/>
    <property type="molecule type" value="mRNA"/>
</dbReference>
<dbReference type="EMBL" id="CH471052">
    <property type="protein sequence ID" value="EAW79698.1"/>
    <property type="molecule type" value="Genomic_DNA"/>
</dbReference>
<dbReference type="CCDS" id="CCDS2958.1">
    <molecule id="P40200-2"/>
</dbReference>
<dbReference type="CCDS" id="CCDS2959.1">
    <molecule id="P40200-1"/>
</dbReference>
<dbReference type="PIR" id="A46462">
    <property type="entry name" value="A46462"/>
</dbReference>
<dbReference type="RefSeq" id="NP_005807.1">
    <molecule id="P40200-2"/>
    <property type="nucleotide sequence ID" value="NM_005816.5"/>
</dbReference>
<dbReference type="RefSeq" id="NP_937839.1">
    <molecule id="P40200-1"/>
    <property type="nucleotide sequence ID" value="NM_198196.3"/>
</dbReference>
<dbReference type="PDB" id="6ARQ">
    <property type="method" value="X-ray"/>
    <property type="resolution" value="2.88 A"/>
    <property type="chains" value="A=21-139"/>
</dbReference>
<dbReference type="PDBsum" id="6ARQ"/>
<dbReference type="SMR" id="P40200"/>
<dbReference type="BioGRID" id="115519">
    <property type="interactions" value="16"/>
</dbReference>
<dbReference type="FunCoup" id="P40200">
    <property type="interactions" value="209"/>
</dbReference>
<dbReference type="IntAct" id="P40200">
    <property type="interactions" value="7"/>
</dbReference>
<dbReference type="STRING" id="9606.ENSP00000283285"/>
<dbReference type="GlyCosmos" id="P40200">
    <property type="glycosylation" value="15 sites, No reported glycans"/>
</dbReference>
<dbReference type="GlyGen" id="P40200">
    <property type="glycosylation" value="15 sites, 1 N-linked glycan (1 site)"/>
</dbReference>
<dbReference type="iPTMnet" id="P40200"/>
<dbReference type="PhosphoSitePlus" id="P40200"/>
<dbReference type="SwissPalm" id="P40200"/>
<dbReference type="BioMuta" id="CD96"/>
<dbReference type="DMDM" id="161784352"/>
<dbReference type="MassIVE" id="P40200"/>
<dbReference type="PaxDb" id="9606-ENSP00000283285"/>
<dbReference type="PeptideAtlas" id="P40200"/>
<dbReference type="ProteomicsDB" id="55346">
    <molecule id="P40200-1"/>
</dbReference>
<dbReference type="ProteomicsDB" id="55347">
    <molecule id="P40200-2"/>
</dbReference>
<dbReference type="ABCD" id="P40200">
    <property type="antibodies" value="19 sequenced antibodies"/>
</dbReference>
<dbReference type="Antibodypedia" id="32434">
    <property type="antibodies" value="353 antibodies from 35 providers"/>
</dbReference>
<dbReference type="DNASU" id="10225"/>
<dbReference type="Ensembl" id="ENST00000283285.10">
    <molecule id="P40200-1"/>
    <property type="protein sequence ID" value="ENSP00000283285.5"/>
    <property type="gene ID" value="ENSG00000153283.14"/>
</dbReference>
<dbReference type="Ensembl" id="ENST00000352690.9">
    <molecule id="P40200-2"/>
    <property type="protein sequence ID" value="ENSP00000342040.3"/>
    <property type="gene ID" value="ENSG00000153283.14"/>
</dbReference>
<dbReference type="GeneID" id="10225"/>
<dbReference type="KEGG" id="hsa:10225"/>
<dbReference type="MANE-Select" id="ENST00000352690.9">
    <molecule id="P40200-2"/>
    <property type="protein sequence ID" value="ENSP00000342040.3"/>
    <property type="RefSeq nucleotide sequence ID" value="NM_005816.5"/>
    <property type="RefSeq protein sequence ID" value="NP_005807.1"/>
</dbReference>
<dbReference type="UCSC" id="uc003dxw.4">
    <molecule id="P40200-1"/>
    <property type="organism name" value="human"/>
</dbReference>
<dbReference type="AGR" id="HGNC:16892"/>
<dbReference type="CTD" id="10225"/>
<dbReference type="DisGeNET" id="10225"/>
<dbReference type="GeneCards" id="CD96"/>
<dbReference type="HGNC" id="HGNC:16892">
    <property type="gene designation" value="CD96"/>
</dbReference>
<dbReference type="HPA" id="ENSG00000153283">
    <property type="expression patterns" value="Tissue enhanced (lymphoid)"/>
</dbReference>
<dbReference type="MalaCards" id="CD96"/>
<dbReference type="MIM" id="211750">
    <property type="type" value="phenotype"/>
</dbReference>
<dbReference type="MIM" id="606037">
    <property type="type" value="gene"/>
</dbReference>
<dbReference type="neXtProt" id="NX_P40200"/>
<dbReference type="OpenTargets" id="ENSG00000153283"/>
<dbReference type="Orphanet" id="1308">
    <property type="disease" value="C syndrome"/>
</dbReference>
<dbReference type="PharmGKB" id="PA437"/>
<dbReference type="VEuPathDB" id="HostDB:ENSG00000153283"/>
<dbReference type="eggNOG" id="ENOG502QWNP">
    <property type="taxonomic scope" value="Eukaryota"/>
</dbReference>
<dbReference type="GeneTree" id="ENSGT00390000003446"/>
<dbReference type="HOGENOM" id="CLU_033543_1_0_1"/>
<dbReference type="InParanoid" id="P40200"/>
<dbReference type="OMA" id="QHGFYCA"/>
<dbReference type="OrthoDB" id="9904226at2759"/>
<dbReference type="PAN-GO" id="P40200">
    <property type="GO annotations" value="2 GO annotations based on evolutionary models"/>
</dbReference>
<dbReference type="PhylomeDB" id="P40200"/>
<dbReference type="TreeFam" id="TF336934"/>
<dbReference type="PathwayCommons" id="P40200"/>
<dbReference type="Reactome" id="R-HSA-198933">
    <property type="pathway name" value="Immunoregulatory interactions between a Lymphoid and a non-Lymphoid cell"/>
</dbReference>
<dbReference type="SignaLink" id="P40200"/>
<dbReference type="BioGRID-ORCS" id="10225">
    <property type="hits" value="13 hits in 1155 CRISPR screens"/>
</dbReference>
<dbReference type="ChiTaRS" id="CD96">
    <property type="organism name" value="human"/>
</dbReference>
<dbReference type="GenomeRNAi" id="10225"/>
<dbReference type="Pharos" id="P40200">
    <property type="development level" value="Tbio"/>
</dbReference>
<dbReference type="PRO" id="PR:P40200"/>
<dbReference type="Proteomes" id="UP000005640">
    <property type="component" value="Chromosome 3"/>
</dbReference>
<dbReference type="RNAct" id="P40200">
    <property type="molecule type" value="protein"/>
</dbReference>
<dbReference type="Bgee" id="ENSG00000153283">
    <property type="expression patterns" value="Expressed in granulocyte and 111 other cell types or tissues"/>
</dbReference>
<dbReference type="ExpressionAtlas" id="P40200">
    <property type="expression patterns" value="baseline and differential"/>
</dbReference>
<dbReference type="GO" id="GO:0005737">
    <property type="term" value="C:cytoplasm"/>
    <property type="evidence" value="ECO:0000314"/>
    <property type="project" value="MGI"/>
</dbReference>
<dbReference type="GO" id="GO:0005886">
    <property type="term" value="C:plasma membrane"/>
    <property type="evidence" value="ECO:0000304"/>
    <property type="project" value="Reactome"/>
</dbReference>
<dbReference type="GO" id="GO:0007155">
    <property type="term" value="P:cell adhesion"/>
    <property type="evidence" value="ECO:0000304"/>
    <property type="project" value="ProtInc"/>
</dbReference>
<dbReference type="GO" id="GO:0007160">
    <property type="term" value="P:cell-matrix adhesion"/>
    <property type="evidence" value="ECO:0000314"/>
    <property type="project" value="MGI"/>
</dbReference>
<dbReference type="GO" id="GO:0006955">
    <property type="term" value="P:immune response"/>
    <property type="evidence" value="ECO:0000304"/>
    <property type="project" value="ProtInc"/>
</dbReference>
<dbReference type="GO" id="GO:0006954">
    <property type="term" value="P:inflammatory response"/>
    <property type="evidence" value="ECO:0000318"/>
    <property type="project" value="GO_Central"/>
</dbReference>
<dbReference type="GO" id="GO:0002728">
    <property type="term" value="P:negative regulation of natural killer cell cytokine production"/>
    <property type="evidence" value="ECO:0007669"/>
    <property type="project" value="Ensembl"/>
</dbReference>
<dbReference type="GO" id="GO:0032689">
    <property type="term" value="P:negative regulation of type II interferon production"/>
    <property type="evidence" value="ECO:0007669"/>
    <property type="project" value="Ensembl"/>
</dbReference>
<dbReference type="GO" id="GO:0032496">
    <property type="term" value="P:response to lipopolysaccharide"/>
    <property type="evidence" value="ECO:0007669"/>
    <property type="project" value="Ensembl"/>
</dbReference>
<dbReference type="FunFam" id="2.60.40.10:FF:001676">
    <property type="entry name" value="CD96 isoform 3"/>
    <property type="match status" value="1"/>
</dbReference>
<dbReference type="FunFam" id="2.60.40.10:FF:002208">
    <property type="entry name" value="CD96 isoform 3"/>
    <property type="match status" value="1"/>
</dbReference>
<dbReference type="FunFam" id="2.60.40.10:FF:002323">
    <property type="entry name" value="CD96 molecule"/>
    <property type="match status" value="1"/>
</dbReference>
<dbReference type="Gene3D" id="2.60.40.10">
    <property type="entry name" value="Immunoglobulins"/>
    <property type="match status" value="3"/>
</dbReference>
<dbReference type="InterPro" id="IPR042381">
    <property type="entry name" value="CD96"/>
</dbReference>
<dbReference type="InterPro" id="IPR007110">
    <property type="entry name" value="Ig-like_dom"/>
</dbReference>
<dbReference type="InterPro" id="IPR036179">
    <property type="entry name" value="Ig-like_dom_sf"/>
</dbReference>
<dbReference type="InterPro" id="IPR013783">
    <property type="entry name" value="Ig-like_fold"/>
</dbReference>
<dbReference type="InterPro" id="IPR003599">
    <property type="entry name" value="Ig_sub"/>
</dbReference>
<dbReference type="PANTHER" id="PTHR15317">
    <property type="entry name" value="T-CELL SURFACE PROTEIN TACTILE"/>
    <property type="match status" value="1"/>
</dbReference>
<dbReference type="PANTHER" id="PTHR15317:SF1">
    <property type="entry name" value="T-CELL SURFACE PROTEIN TACTILE"/>
    <property type="match status" value="1"/>
</dbReference>
<dbReference type="SMART" id="SM00409">
    <property type="entry name" value="IG"/>
    <property type="match status" value="2"/>
</dbReference>
<dbReference type="SUPFAM" id="SSF48726">
    <property type="entry name" value="Immunoglobulin"/>
    <property type="match status" value="1"/>
</dbReference>
<dbReference type="PROSITE" id="PS50835">
    <property type="entry name" value="IG_LIKE"/>
    <property type="match status" value="1"/>
</dbReference>
<accession>P40200</accession>
<accession>Q5JPB3</accession>
<gene>
    <name type="primary">CD96</name>
</gene>
<comment type="function">
    <text>May be involved in adhesive interactions of activated T and NK cells during the late phase of the immune response. Promotes NK cell-target adhesion by interacting with PVR present on target cells. May function at a time after T and NK cells have penetrated the endothelium using integrins and selectins, when they are actively engaging diseased cells and moving within areas of inflammation.</text>
</comment>
<comment type="subunit">
    <text evidence="3">Homodimer; disulfide-linked. Interacts with PVR.</text>
</comment>
<comment type="subcellular location">
    <subcellularLocation>
        <location>Membrane</location>
        <topology>Single-pass type I membrane protein</topology>
    </subcellularLocation>
</comment>
<comment type="alternative products">
    <event type="alternative splicing"/>
    <isoform>
        <id>P40200-1</id>
        <name>1</name>
        <sequence type="displayed"/>
    </isoform>
    <isoform>
        <id>P40200-2</id>
        <name>2</name>
        <sequence type="described" ref="VSP_029908"/>
    </isoform>
</comment>
<comment type="tissue specificity">
    <text>Expressed on normal T-cell lines and clones, and some transformed T-cells, but no other cultured cell lines tested. It is expressed at very low levels on activated B-cells.</text>
</comment>
<comment type="developmental stage">
    <text>Expressed at low levels on peripheral T-cells and is strongly up-regulated after activation, peaking 6 to 9 days after the activating stimulus.</text>
</comment>
<comment type="disease" evidence="4">
    <disease id="DI-01303">
        <name>C syndrome</name>
        <acronym>CSYN</acronym>
        <description>A syndrome characterized by trigonocephaly, severe intellectual disability, hypotonia, variable cardiac defects, redundant skin, and dysmorphic facial features, including upslanted palpebral fissures, epicanthal folds, depressed nasal bridge, and low-set, posteriorly rotated ears.</description>
        <dbReference type="MIM" id="211750"/>
    </disease>
    <text>The disease is caused by variants affecting the gene represented in this entry. A chromosomal aberration involving CD96 has been found in a patient with C syndrome. Translocation t(3;18)(q13.13;q12.1). CD96 gene was located at the 3q13.13 breakpoint. Precise structural analysis around the breakpoint showed that the gene was disrupted by the translocation in exon 5, probably leading to premature termination or loss of expression of CD96 protein. No gene was detected at the chromosome 18 breakpoint.</text>
</comment>